<gene>
    <name evidence="1" type="primary">bamA</name>
    <name type="synonym">yaeT</name>
    <name type="ordered locus">SeSA_A0250</name>
</gene>
<dbReference type="EMBL" id="CP001127">
    <property type="protein sequence ID" value="ACF89086.1"/>
    <property type="molecule type" value="Genomic_DNA"/>
</dbReference>
<dbReference type="RefSeq" id="WP_001240931.1">
    <property type="nucleotide sequence ID" value="NC_011094.1"/>
</dbReference>
<dbReference type="SMR" id="B4TYD7"/>
<dbReference type="KEGG" id="sew:SeSA_A0250"/>
<dbReference type="HOGENOM" id="CLU_007664_1_0_6"/>
<dbReference type="Proteomes" id="UP000001865">
    <property type="component" value="Chromosome"/>
</dbReference>
<dbReference type="GO" id="GO:1990063">
    <property type="term" value="C:Bam protein complex"/>
    <property type="evidence" value="ECO:0007669"/>
    <property type="project" value="TreeGrafter"/>
</dbReference>
<dbReference type="GO" id="GO:0043165">
    <property type="term" value="P:Gram-negative-bacterium-type cell outer membrane assembly"/>
    <property type="evidence" value="ECO:0007669"/>
    <property type="project" value="UniProtKB-UniRule"/>
</dbReference>
<dbReference type="GO" id="GO:0051205">
    <property type="term" value="P:protein insertion into membrane"/>
    <property type="evidence" value="ECO:0007669"/>
    <property type="project" value="UniProtKB-UniRule"/>
</dbReference>
<dbReference type="FunFam" id="2.40.160.50:FF:000001">
    <property type="entry name" value="Outer membrane protein assembly factor BamA"/>
    <property type="match status" value="1"/>
</dbReference>
<dbReference type="FunFam" id="3.10.20.310:FF:000001">
    <property type="entry name" value="Outer membrane protein assembly factor BamA"/>
    <property type="match status" value="1"/>
</dbReference>
<dbReference type="FunFam" id="3.10.20.310:FF:000002">
    <property type="entry name" value="Outer membrane protein assembly factor BamA"/>
    <property type="match status" value="1"/>
</dbReference>
<dbReference type="FunFam" id="3.10.20.310:FF:000003">
    <property type="entry name" value="Outer membrane protein assembly factor BamA"/>
    <property type="match status" value="1"/>
</dbReference>
<dbReference type="FunFam" id="3.10.20.310:FF:000004">
    <property type="entry name" value="Outer membrane protein assembly factor BamA"/>
    <property type="match status" value="1"/>
</dbReference>
<dbReference type="FunFam" id="3.10.20.310:FF:000005">
    <property type="entry name" value="Outer membrane protein assembly factor BamA"/>
    <property type="match status" value="1"/>
</dbReference>
<dbReference type="Gene3D" id="3.10.20.310">
    <property type="entry name" value="membrane protein fhac"/>
    <property type="match status" value="5"/>
</dbReference>
<dbReference type="Gene3D" id="2.40.160.50">
    <property type="entry name" value="membrane protein fhac: a member of the omp85/tpsb transporter family"/>
    <property type="match status" value="1"/>
</dbReference>
<dbReference type="HAMAP" id="MF_01430">
    <property type="entry name" value="OM_assembly_BamA"/>
    <property type="match status" value="1"/>
</dbReference>
<dbReference type="InterPro" id="IPR000184">
    <property type="entry name" value="Bac_surfAg_D15"/>
</dbReference>
<dbReference type="InterPro" id="IPR010827">
    <property type="entry name" value="BamA/TamA_POTRA"/>
</dbReference>
<dbReference type="InterPro" id="IPR039910">
    <property type="entry name" value="D15-like"/>
</dbReference>
<dbReference type="InterPro" id="IPR023707">
    <property type="entry name" value="OM_assembly_BamA"/>
</dbReference>
<dbReference type="InterPro" id="IPR034746">
    <property type="entry name" value="POTRA"/>
</dbReference>
<dbReference type="NCBIfam" id="TIGR03303">
    <property type="entry name" value="OM_YaeT"/>
    <property type="match status" value="1"/>
</dbReference>
<dbReference type="NCBIfam" id="NF008287">
    <property type="entry name" value="PRK11067.1"/>
    <property type="match status" value="1"/>
</dbReference>
<dbReference type="PANTHER" id="PTHR12815:SF23">
    <property type="entry name" value="OUTER MEMBRANE PROTEIN ASSEMBLY FACTOR BAMA"/>
    <property type="match status" value="1"/>
</dbReference>
<dbReference type="PANTHER" id="PTHR12815">
    <property type="entry name" value="SORTING AND ASSEMBLY MACHINERY SAMM50 PROTEIN FAMILY MEMBER"/>
    <property type="match status" value="1"/>
</dbReference>
<dbReference type="Pfam" id="PF01103">
    <property type="entry name" value="Omp85"/>
    <property type="match status" value="1"/>
</dbReference>
<dbReference type="Pfam" id="PF07244">
    <property type="entry name" value="POTRA"/>
    <property type="match status" value="4"/>
</dbReference>
<dbReference type="PIRSF" id="PIRSF006076">
    <property type="entry name" value="OM_assembly_OMP85"/>
    <property type="match status" value="1"/>
</dbReference>
<dbReference type="PROSITE" id="PS51779">
    <property type="entry name" value="POTRA"/>
    <property type="match status" value="5"/>
</dbReference>
<feature type="signal peptide" evidence="1">
    <location>
        <begin position="1"/>
        <end position="20"/>
    </location>
</feature>
<feature type="chain" id="PRO_1000145786" description="Outer membrane protein assembly factor BamA">
    <location>
        <begin position="21"/>
        <end position="810"/>
    </location>
</feature>
<feature type="domain" description="POTRA 1" evidence="2">
    <location>
        <begin position="24"/>
        <end position="91"/>
    </location>
</feature>
<feature type="domain" description="POTRA 2" evidence="2">
    <location>
        <begin position="92"/>
        <end position="172"/>
    </location>
</feature>
<feature type="domain" description="POTRA 3" evidence="2">
    <location>
        <begin position="175"/>
        <end position="263"/>
    </location>
</feature>
<feature type="domain" description="POTRA 4" evidence="2">
    <location>
        <begin position="266"/>
        <end position="344"/>
    </location>
</feature>
<feature type="domain" description="POTRA 5" evidence="2">
    <location>
        <begin position="347"/>
        <end position="421"/>
    </location>
</feature>
<keyword id="KW-0998">Cell outer membrane</keyword>
<keyword id="KW-0472">Membrane</keyword>
<keyword id="KW-0677">Repeat</keyword>
<keyword id="KW-0732">Signal</keyword>
<keyword id="KW-0812">Transmembrane</keyword>
<keyword id="KW-1134">Transmembrane beta strand</keyword>
<organism>
    <name type="scientific">Salmonella schwarzengrund (strain CVM19633)</name>
    <dbReference type="NCBI Taxonomy" id="439843"/>
    <lineage>
        <taxon>Bacteria</taxon>
        <taxon>Pseudomonadati</taxon>
        <taxon>Pseudomonadota</taxon>
        <taxon>Gammaproteobacteria</taxon>
        <taxon>Enterobacterales</taxon>
        <taxon>Enterobacteriaceae</taxon>
        <taxon>Salmonella</taxon>
    </lineage>
</organism>
<accession>B4TYD7</accession>
<sequence length="810" mass="90600">MAMKKLLIASLLFSSATVYGAEGFVVKDIHFEGLQRVAVGAALLSMPVRTGDTVNDEDISNTIRALFATGNFEDVRVLRDGNTLLVQVKERPTIASITFSGNKSVKDDMLKQNLEASGVRVGESLDRTTLSDIEKGLEDFYYSVGKYSASVKAVVTPLPRNRVDLKLVFQEGVSAKIQQINIVGNHAFSTEELISHFQLRDEVPWWNVVGDRKYQKQKLAGDLETLRSYYLDRGYARFNIDSTQVSLTPDKKGIYITVNITEGDQYKLSGVQVSGNLAGHSAEIEKLTKIEPGELYNGTKVTKMEDDIKKLLGRYGYAYPRVQSQPEINDADKTVKLRVNVDAGNRFYVRKIRFEGNDTSKDSVLRREMRQMEGAWLGSDLVDQGKERLNRLGFFETVDTDTQRVPGSPDQVDVVYKVKERNTGSFNFGIGYGTESGVSFQAGVQQDNWLGTGYSVGINGTKNDYQTYSELSVTNPYFTVDGVSLGGRIFYNDFQADDADLSDYTNKSYGTDVTLGFPINEYNTLRAGLGYVHNSLSNMEPQVAMWRYLASMGQYPSTNDQDNSFSTDDFTFNYGWTYNKLDRGYFPTEGTRINLTGKVTIPGSDNEYYKATLDTATYVPIDNDHKWVILGRTRFGYGDGLGGKEMPFYENFYAGGSSTVRGFQSNTIGPKAVYYPYNPKNYDADEDYDCATQDGAKDMCKSDDAVGGNAMAVASLEFITPTPFISEKYANSVRTSFFWDMGTVWDTNWDSSQYSGYPDYSDPSNIRMSAGIALQWMSPLGPLVFSYAQPFKKYDGDKAEQFQFNIGKTW</sequence>
<evidence type="ECO:0000255" key="1">
    <source>
        <dbReference type="HAMAP-Rule" id="MF_01430"/>
    </source>
</evidence>
<evidence type="ECO:0000255" key="2">
    <source>
        <dbReference type="PROSITE-ProRule" id="PRU01115"/>
    </source>
</evidence>
<name>BAMA_SALSV</name>
<reference key="1">
    <citation type="journal article" date="2011" name="J. Bacteriol.">
        <title>Comparative genomics of 28 Salmonella enterica isolates: evidence for CRISPR-mediated adaptive sublineage evolution.</title>
        <authorList>
            <person name="Fricke W.F."/>
            <person name="Mammel M.K."/>
            <person name="McDermott P.F."/>
            <person name="Tartera C."/>
            <person name="White D.G."/>
            <person name="Leclerc J.E."/>
            <person name="Ravel J."/>
            <person name="Cebula T.A."/>
        </authorList>
    </citation>
    <scope>NUCLEOTIDE SEQUENCE [LARGE SCALE GENOMIC DNA]</scope>
    <source>
        <strain>CVM19633</strain>
    </source>
</reference>
<protein>
    <recommendedName>
        <fullName evidence="1">Outer membrane protein assembly factor BamA</fullName>
    </recommendedName>
</protein>
<proteinExistence type="inferred from homology"/>
<comment type="function">
    <text evidence="1">Part of the outer membrane protein assembly complex, which is involved in assembly and insertion of beta-barrel proteins into the outer membrane. Constitutes, with BamD, the core component of the assembly machinery.</text>
</comment>
<comment type="subunit">
    <text evidence="1">Part of the Bam complex, which is composed of the outer membrane protein BamA, and four lipoproteins BamB, BamC, BamD and BamE.</text>
</comment>
<comment type="subcellular location">
    <subcellularLocation>
        <location evidence="1">Cell outer membrane</location>
    </subcellularLocation>
</comment>
<comment type="similarity">
    <text evidence="1">Belongs to the BamA family.</text>
</comment>